<sequence>MTELLQWARHHWRRLSHGRAQGEDERPYNYASLLACGGKSSRTPRPAGKHRVVIPHLQCFKDEYERFSGTYVNNRIRTTKYTLLNFVPRNLFEQFHRAANLYFLFLVVLNWVPLVEAFQKEITMLPLVVVLTIIAIKDGLEDYRKYKIDKQINNLITKVYSRKEKKYIDCCWKNVTVGDFIRLSCNEIIPADMVLLFSTDPDGICHIETSGLDGESNLKQRQVVRGYTEQDSEVDPEKFSSRIECESPNNDLSRFRGFLEHANKERVGLSKENLLLRGCTIRNTEAVVGIVVYAGHETKAMLNNSGPRYKRSKLERRANTDVLWCVLLLIVMCLTGALGHGIWLSRYENMLFFNIPEPDGRVISPVLTGFYVFWTMIILLQVLIPISLYVSIEIVKLGQIYFIQSDVDFYNEKMDSTIQCRALNITEDLGQIQYLFSDKTGTLTENKMVFRRCSVAGFDYCHEENAKRLESYQEAVSEEEECTDTLGGSLSNMARPRAQGCRTVPSGPLGKPSAQLSGSTSAVGNGEGSGEVPHSRQAAFSSPMETDVVPDTRLLDKFSQLTPQLLTGLDGTAQSSPLETLYIMDFFIALAICNTVVVSAPNQPRQKIGLSSLGGMPIKSLEEIKNIFQKLSVRRSSSPSLASGKDSSSGTPCAFVSRISFFSRPKLSPPMEDESSQMDEIPQASNSACCTETEAQNRAVGLSVSSAEALSGPPPSASNLCYEAESPDEAALVYAARAYRCTLQSRTPEQVMVDFAALGSLTFQLLHILPFDSVRKRMSVVVRHPLSKQVVVYTKGADSVIMELLSVAASDGTNPEQQMIIRERTQRHLDEYAKRGLRTLCVAKKVMSDTEYAEWLRNHFLAETSIDNREELLVESAMRLENKLTLLGATGIEDRLQEGVPESIEALHQAGIKIWMLTGDKQETAVNIAYACKLLEPDDKLFILNTQSQDACGMLMSAILEELQKRAQVSPELASSRKNFPQPSDAQGQGRAGLVITGKTLEFALQESLQRQFLELTAWCQAVICCRATPLQKSEVVKLVRNHHHVLTLPIGDGANDVSMIQVADIGIGVSGQEGMQAVMASDFAISQFRHLSKLLLVHGHWCYTRLSNMILYFFYKNVAYVNLLFWYQFFCGFSGTSMTDYWVLIFFNLLFTSVPPIIYGVLEKDVSAETLLQLPELYRSGQRSEEYLPLTFWITLLDAFYQSLVCFFVPYFTYQGSDIDIFTFGNPLNTAALFIILLHLVIESKSLTWIHMLVTVGSILSYFFFALAFGALCVTCNPPSNPYGIMRKHMLDPVFYLVCVLTTFVALLPRFLYRVLQGSVFPSPVLRAKYFDRLPPEERAEALKRWRGTAKVNHVASKHASQSAAMSGRPTPGSSAVLAMKSATVSTVEQSTRETALDRGCSEPGASKMTGSSAS</sequence>
<gene>
    <name type="primary">Atp10d</name>
</gene>
<dbReference type="EC" id="7.6.2.1" evidence="5"/>
<dbReference type="EMBL" id="AJ441079">
    <property type="protein sequence ID" value="CAD29578.1"/>
    <property type="molecule type" value="mRNA"/>
</dbReference>
<dbReference type="EMBL" id="BC029551">
    <property type="protein sequence ID" value="AAH29551.1"/>
    <property type="status" value="ALT_FRAME"/>
    <property type="molecule type" value="mRNA"/>
</dbReference>
<dbReference type="RefSeq" id="NP_700438.3">
    <property type="nucleotide sequence ID" value="NM_153389.3"/>
</dbReference>
<dbReference type="SMR" id="Q8K2X1"/>
<dbReference type="BioGRID" id="231104">
    <property type="interactions" value="1"/>
</dbReference>
<dbReference type="FunCoup" id="Q8K2X1">
    <property type="interactions" value="910"/>
</dbReference>
<dbReference type="GlyGen" id="Q8K2X1">
    <property type="glycosylation" value="1 site"/>
</dbReference>
<dbReference type="iPTMnet" id="Q8K2X1"/>
<dbReference type="PhosphoSitePlus" id="Q8K2X1"/>
<dbReference type="jPOST" id="Q8K2X1"/>
<dbReference type="ProteomicsDB" id="281926">
    <molecule id="Q8K2X1-1"/>
</dbReference>
<dbReference type="ProteomicsDB" id="281927">
    <molecule id="Q8K2X1-2"/>
</dbReference>
<dbReference type="DNASU" id="231287"/>
<dbReference type="GeneID" id="231287"/>
<dbReference type="KEGG" id="mmu:231287"/>
<dbReference type="UCSC" id="uc008xrh.2">
    <molecule id="Q8K2X1-1"/>
    <property type="organism name" value="mouse"/>
</dbReference>
<dbReference type="AGR" id="MGI:2450125"/>
<dbReference type="CTD" id="57205"/>
<dbReference type="MGI" id="MGI:2450125">
    <property type="gene designation" value="Atp10d"/>
</dbReference>
<dbReference type="InParanoid" id="Q8K2X1"/>
<dbReference type="PhylomeDB" id="Q8K2X1"/>
<dbReference type="BRENDA" id="7.6.2.1">
    <property type="organism ID" value="3474"/>
</dbReference>
<dbReference type="Reactome" id="R-MMU-936837">
    <property type="pathway name" value="Ion transport by P-type ATPases"/>
</dbReference>
<dbReference type="BioGRID-ORCS" id="231287">
    <property type="hits" value="0 hits in 17 CRISPR screens"/>
</dbReference>
<dbReference type="PRO" id="PR:Q8K2X1"/>
<dbReference type="Proteomes" id="UP000000589">
    <property type="component" value="Unplaced"/>
</dbReference>
<dbReference type="RNAct" id="Q8K2X1">
    <property type="molecule type" value="protein"/>
</dbReference>
<dbReference type="GO" id="GO:0005789">
    <property type="term" value="C:endoplasmic reticulum membrane"/>
    <property type="evidence" value="ECO:0007669"/>
    <property type="project" value="UniProtKB-SubCell"/>
</dbReference>
<dbReference type="GO" id="GO:0016020">
    <property type="term" value="C:membrane"/>
    <property type="evidence" value="ECO:0000303"/>
    <property type="project" value="UniProtKB"/>
</dbReference>
<dbReference type="GO" id="GO:0005739">
    <property type="term" value="C:mitochondrion"/>
    <property type="evidence" value="ECO:0007005"/>
    <property type="project" value="MGI"/>
</dbReference>
<dbReference type="GO" id="GO:0005886">
    <property type="term" value="C:plasma membrane"/>
    <property type="evidence" value="ECO:0007669"/>
    <property type="project" value="UniProtKB-SubCell"/>
</dbReference>
<dbReference type="GO" id="GO:0005524">
    <property type="term" value="F:ATP binding"/>
    <property type="evidence" value="ECO:0000303"/>
    <property type="project" value="UniProtKB"/>
</dbReference>
<dbReference type="GO" id="GO:0016887">
    <property type="term" value="F:ATP hydrolysis activity"/>
    <property type="evidence" value="ECO:0007669"/>
    <property type="project" value="InterPro"/>
</dbReference>
<dbReference type="GO" id="GO:0140326">
    <property type="term" value="F:ATPase-coupled intramembrane lipid transporter activity"/>
    <property type="evidence" value="ECO:0000303"/>
    <property type="project" value="UniProtKB"/>
</dbReference>
<dbReference type="GO" id="GO:0000287">
    <property type="term" value="F:magnesium ion binding"/>
    <property type="evidence" value="ECO:0000303"/>
    <property type="project" value="UniProtKB"/>
</dbReference>
<dbReference type="GO" id="GO:0006812">
    <property type="term" value="P:monoatomic cation transport"/>
    <property type="evidence" value="ECO:0000303"/>
    <property type="project" value="UniProtKB"/>
</dbReference>
<dbReference type="GO" id="GO:0015914">
    <property type="term" value="P:phospholipid transport"/>
    <property type="evidence" value="ECO:0007669"/>
    <property type="project" value="InterPro"/>
</dbReference>
<dbReference type="CDD" id="cd02073">
    <property type="entry name" value="P-type_ATPase_APLT_Dnf-like"/>
    <property type="match status" value="1"/>
</dbReference>
<dbReference type="FunFam" id="2.70.150.10:FF:000022">
    <property type="entry name" value="Phospholipid-transporting ATPase"/>
    <property type="match status" value="1"/>
</dbReference>
<dbReference type="FunFam" id="3.40.1110.10:FF:000009">
    <property type="entry name" value="Phospholipid-transporting ATPase"/>
    <property type="match status" value="1"/>
</dbReference>
<dbReference type="FunFam" id="3.40.50.1000:FF:000023">
    <property type="entry name" value="Phospholipid-transporting ATPase"/>
    <property type="match status" value="1"/>
</dbReference>
<dbReference type="FunFam" id="3.40.50.1000:FF:000001">
    <property type="entry name" value="Phospholipid-transporting ATPase IC"/>
    <property type="match status" value="1"/>
</dbReference>
<dbReference type="Gene3D" id="3.40.1110.10">
    <property type="entry name" value="Calcium-transporting ATPase, cytoplasmic domain N"/>
    <property type="match status" value="2"/>
</dbReference>
<dbReference type="Gene3D" id="2.70.150.10">
    <property type="entry name" value="Calcium-transporting ATPase, cytoplasmic transduction domain A"/>
    <property type="match status" value="1"/>
</dbReference>
<dbReference type="Gene3D" id="1.20.1110.10">
    <property type="entry name" value="Calcium-transporting ATPase, transmembrane domain"/>
    <property type="match status" value="1"/>
</dbReference>
<dbReference type="Gene3D" id="3.40.50.1000">
    <property type="entry name" value="HAD superfamily/HAD-like"/>
    <property type="match status" value="2"/>
</dbReference>
<dbReference type="InterPro" id="IPR023299">
    <property type="entry name" value="ATPase_P-typ_cyto_dom_N"/>
</dbReference>
<dbReference type="InterPro" id="IPR018303">
    <property type="entry name" value="ATPase_P-typ_P_site"/>
</dbReference>
<dbReference type="InterPro" id="IPR023298">
    <property type="entry name" value="ATPase_P-typ_TM_dom_sf"/>
</dbReference>
<dbReference type="InterPro" id="IPR008250">
    <property type="entry name" value="ATPase_P-typ_transduc_dom_A_sf"/>
</dbReference>
<dbReference type="InterPro" id="IPR036412">
    <property type="entry name" value="HAD-like_sf"/>
</dbReference>
<dbReference type="InterPro" id="IPR023214">
    <property type="entry name" value="HAD_sf"/>
</dbReference>
<dbReference type="InterPro" id="IPR006539">
    <property type="entry name" value="P-type_ATPase_IV"/>
</dbReference>
<dbReference type="InterPro" id="IPR032631">
    <property type="entry name" value="P-type_ATPase_N"/>
</dbReference>
<dbReference type="InterPro" id="IPR001757">
    <property type="entry name" value="P_typ_ATPase"/>
</dbReference>
<dbReference type="InterPro" id="IPR032630">
    <property type="entry name" value="P_typ_ATPase_c"/>
</dbReference>
<dbReference type="InterPro" id="IPR044492">
    <property type="entry name" value="P_typ_ATPase_HD_dom"/>
</dbReference>
<dbReference type="NCBIfam" id="TIGR01652">
    <property type="entry name" value="ATPase-Plipid"/>
    <property type="match status" value="2"/>
</dbReference>
<dbReference type="NCBIfam" id="TIGR01494">
    <property type="entry name" value="ATPase_P-type"/>
    <property type="match status" value="2"/>
</dbReference>
<dbReference type="PANTHER" id="PTHR24092:SF84">
    <property type="entry name" value="PHOSPHOLIPID-TRANSPORTING ATPASE VD"/>
    <property type="match status" value="1"/>
</dbReference>
<dbReference type="PANTHER" id="PTHR24092">
    <property type="entry name" value="PROBABLE PHOSPHOLIPID-TRANSPORTING ATPASE"/>
    <property type="match status" value="1"/>
</dbReference>
<dbReference type="Pfam" id="PF13246">
    <property type="entry name" value="Cation_ATPase"/>
    <property type="match status" value="1"/>
</dbReference>
<dbReference type="Pfam" id="PF16212">
    <property type="entry name" value="PhoLip_ATPase_C"/>
    <property type="match status" value="1"/>
</dbReference>
<dbReference type="Pfam" id="PF16209">
    <property type="entry name" value="PhoLip_ATPase_N"/>
    <property type="match status" value="1"/>
</dbReference>
<dbReference type="PRINTS" id="PR00119">
    <property type="entry name" value="CATATPASE"/>
</dbReference>
<dbReference type="SFLD" id="SFLDG00002">
    <property type="entry name" value="C1.7:_P-type_atpase_like"/>
    <property type="match status" value="1"/>
</dbReference>
<dbReference type="SFLD" id="SFLDF00027">
    <property type="entry name" value="p-type_atpase"/>
    <property type="match status" value="1"/>
</dbReference>
<dbReference type="SUPFAM" id="SSF81653">
    <property type="entry name" value="Calcium ATPase, transduction domain A"/>
    <property type="match status" value="1"/>
</dbReference>
<dbReference type="SUPFAM" id="SSF81665">
    <property type="entry name" value="Calcium ATPase, transmembrane domain M"/>
    <property type="match status" value="1"/>
</dbReference>
<dbReference type="SUPFAM" id="SSF56784">
    <property type="entry name" value="HAD-like"/>
    <property type="match status" value="1"/>
</dbReference>
<dbReference type="SUPFAM" id="SSF81660">
    <property type="entry name" value="Metal cation-transporting ATPase, ATP-binding domain N"/>
    <property type="match status" value="1"/>
</dbReference>
<dbReference type="PROSITE" id="PS00154">
    <property type="entry name" value="ATPASE_E1_E2"/>
    <property type="match status" value="1"/>
</dbReference>
<evidence type="ECO:0000250" key="1">
    <source>
        <dbReference type="UniProtKB" id="O94823"/>
    </source>
</evidence>
<evidence type="ECO:0000250" key="2">
    <source>
        <dbReference type="UniProtKB" id="P04191"/>
    </source>
</evidence>
<evidence type="ECO:0000250" key="3">
    <source>
        <dbReference type="UniProtKB" id="Q8NB49"/>
    </source>
</evidence>
<evidence type="ECO:0000250" key="4">
    <source>
        <dbReference type="UniProtKB" id="Q9HD20"/>
    </source>
</evidence>
<evidence type="ECO:0000250" key="5">
    <source>
        <dbReference type="UniProtKB" id="Q9P241"/>
    </source>
</evidence>
<evidence type="ECO:0000250" key="6">
    <source>
        <dbReference type="UniProtKB" id="Q9Y2Q0"/>
    </source>
</evidence>
<evidence type="ECO:0000255" key="7"/>
<evidence type="ECO:0000256" key="8">
    <source>
        <dbReference type="SAM" id="MobiDB-lite"/>
    </source>
</evidence>
<evidence type="ECO:0000269" key="9">
    <source>
    </source>
</evidence>
<evidence type="ECO:0000269" key="10">
    <source>
    </source>
</evidence>
<evidence type="ECO:0000303" key="11">
    <source>
    </source>
</evidence>
<evidence type="ECO:0000305" key="12"/>
<evidence type="ECO:0000312" key="13">
    <source>
        <dbReference type="EMBL" id="AAH29551.1"/>
    </source>
</evidence>
<feature type="chain" id="PRO_0000046384" description="Phospholipid-transporting ATPase VD">
    <location>
        <begin position="1"/>
        <end position="1416"/>
    </location>
</feature>
<feature type="topological domain" description="Cytoplasmic" evidence="7">
    <location>
        <begin position="1"/>
        <end position="97"/>
    </location>
</feature>
<feature type="transmembrane region" description="Helical" evidence="7">
    <location>
        <begin position="98"/>
        <end position="118"/>
    </location>
</feature>
<feature type="topological domain" description="Exoplasmic loop" evidence="7">
    <location>
        <begin position="119"/>
        <end position="120"/>
    </location>
</feature>
<feature type="transmembrane region" description="Helical" evidence="7">
    <location>
        <begin position="121"/>
        <end position="141"/>
    </location>
</feature>
<feature type="topological domain" description="Cytoplasmic" evidence="7">
    <location>
        <begin position="142"/>
        <end position="321"/>
    </location>
</feature>
<feature type="transmembrane region" description="Helical" evidence="7">
    <location>
        <begin position="322"/>
        <end position="342"/>
    </location>
</feature>
<feature type="topological domain" description="Exoplasmic loop" evidence="7">
    <location>
        <begin position="343"/>
        <end position="365"/>
    </location>
</feature>
<feature type="transmembrane region" description="Helical" evidence="7">
    <location>
        <begin position="366"/>
        <end position="386"/>
    </location>
</feature>
<feature type="topological domain" description="Cytoplasmic" evidence="7">
    <location>
        <begin position="387"/>
        <end position="1110"/>
    </location>
</feature>
<feature type="transmembrane region" description="Helical" evidence="7">
    <location>
        <begin position="1111"/>
        <end position="1131"/>
    </location>
</feature>
<feature type="topological domain" description="Exoplasmic loop" evidence="7">
    <location>
        <begin position="1132"/>
        <end position="1142"/>
    </location>
</feature>
<feature type="transmembrane region" description="Helical" evidence="7">
    <location>
        <begin position="1143"/>
        <end position="1163"/>
    </location>
</feature>
<feature type="topological domain" description="Cytoplasmic" evidence="7">
    <location>
        <begin position="1164"/>
        <end position="1192"/>
    </location>
</feature>
<feature type="transmembrane region" description="Helical" evidence="7">
    <location>
        <begin position="1193"/>
        <end position="1213"/>
    </location>
</feature>
<feature type="topological domain" description="Exoplasmic loop" evidence="7">
    <location>
        <begin position="1214"/>
        <end position="1221"/>
    </location>
</feature>
<feature type="transmembrane region" description="Helical" evidence="7">
    <location>
        <begin position="1222"/>
        <end position="1242"/>
    </location>
</feature>
<feature type="topological domain" description="Cytoplasmic" evidence="7">
    <location>
        <begin position="1243"/>
        <end position="1252"/>
    </location>
</feature>
<feature type="transmembrane region" description="Helical" evidence="7">
    <location>
        <begin position="1253"/>
        <end position="1273"/>
    </location>
</feature>
<feature type="topological domain" description="Exoplasmic loop" evidence="7">
    <location>
        <begin position="1274"/>
        <end position="1289"/>
    </location>
</feature>
<feature type="transmembrane region" description="Helical" evidence="7">
    <location>
        <begin position="1290"/>
        <end position="1310"/>
    </location>
</feature>
<feature type="topological domain" description="Cytoplasmic" evidence="7">
    <location>
        <begin position="1311"/>
        <end position="1416"/>
    </location>
</feature>
<feature type="region of interest" description="Disordered" evidence="8">
    <location>
        <begin position="498"/>
        <end position="544"/>
    </location>
</feature>
<feature type="region of interest" description="Disordered" evidence="8">
    <location>
        <begin position="971"/>
        <end position="990"/>
    </location>
</feature>
<feature type="region of interest" description="Disordered" evidence="8">
    <location>
        <begin position="1358"/>
        <end position="1416"/>
    </location>
</feature>
<feature type="compositionally biased region" description="Polar residues" evidence="8">
    <location>
        <begin position="514"/>
        <end position="523"/>
    </location>
</feature>
<feature type="compositionally biased region" description="Polar residues" evidence="8">
    <location>
        <begin position="976"/>
        <end position="987"/>
    </location>
</feature>
<feature type="compositionally biased region" description="Basic and acidic residues" evidence="8">
    <location>
        <begin position="1392"/>
        <end position="1402"/>
    </location>
</feature>
<feature type="active site" description="4-aspartylphosphate intermediate" evidence="4">
    <location>
        <position position="438"/>
    </location>
</feature>
<feature type="binding site" evidence="6">
    <location>
        <position position="438"/>
    </location>
    <ligand>
        <name>ATP</name>
        <dbReference type="ChEBI" id="CHEBI:30616"/>
    </ligand>
</feature>
<feature type="binding site" evidence="6">
    <location>
        <position position="438"/>
    </location>
    <ligand>
        <name>Mg(2+)</name>
        <dbReference type="ChEBI" id="CHEBI:18420"/>
    </ligand>
</feature>
<feature type="binding site" evidence="6">
    <location>
        <position position="439"/>
    </location>
    <ligand>
        <name>ATP</name>
        <dbReference type="ChEBI" id="CHEBI:30616"/>
    </ligand>
</feature>
<feature type="binding site" evidence="6">
    <location>
        <position position="440"/>
    </location>
    <ligand>
        <name>ATP</name>
        <dbReference type="ChEBI" id="CHEBI:30616"/>
    </ligand>
</feature>
<feature type="binding site" evidence="6">
    <location>
        <position position="440"/>
    </location>
    <ligand>
        <name>Mg(2+)</name>
        <dbReference type="ChEBI" id="CHEBI:18420"/>
    </ligand>
</feature>
<feature type="binding site" evidence="2">
    <location>
        <position position="729"/>
    </location>
    <ligand>
        <name>ATP</name>
        <dbReference type="ChEBI" id="CHEBI:30616"/>
    </ligand>
</feature>
<feature type="binding site" evidence="6">
    <location>
        <position position="771"/>
    </location>
    <ligand>
        <name>ATP</name>
        <dbReference type="ChEBI" id="CHEBI:30616"/>
    </ligand>
</feature>
<feature type="binding site" evidence="2">
    <location>
        <position position="795"/>
    </location>
    <ligand>
        <name>ATP</name>
        <dbReference type="ChEBI" id="CHEBI:30616"/>
    </ligand>
</feature>
<feature type="binding site" evidence="2">
    <location>
        <position position="838"/>
    </location>
    <ligand>
        <name>ATP</name>
        <dbReference type="ChEBI" id="CHEBI:30616"/>
    </ligand>
</feature>
<feature type="binding site" evidence="2">
    <location>
        <position position="918"/>
    </location>
    <ligand>
        <name>ATP</name>
        <dbReference type="ChEBI" id="CHEBI:30616"/>
    </ligand>
</feature>
<feature type="binding site" evidence="2">
    <location>
        <position position="919"/>
    </location>
    <ligand>
        <name>ATP</name>
        <dbReference type="ChEBI" id="CHEBI:30616"/>
    </ligand>
</feature>
<feature type="binding site" evidence="2">
    <location>
        <position position="920"/>
    </location>
    <ligand>
        <name>ATP</name>
        <dbReference type="ChEBI" id="CHEBI:30616"/>
    </ligand>
</feature>
<feature type="binding site" evidence="12">
    <location>
        <begin position="993"/>
        <end position="1000"/>
    </location>
    <ligand>
        <name>ATP</name>
        <dbReference type="ChEBI" id="CHEBI:30616"/>
    </ligand>
</feature>
<feature type="binding site" evidence="2">
    <location>
        <position position="1027"/>
    </location>
    <ligand>
        <name>ATP</name>
        <dbReference type="ChEBI" id="CHEBI:30616"/>
    </ligand>
</feature>
<feature type="binding site" evidence="2">
    <location>
        <position position="1033"/>
    </location>
    <ligand>
        <name>ATP</name>
        <dbReference type="ChEBI" id="CHEBI:30616"/>
    </ligand>
</feature>
<feature type="binding site" evidence="3">
    <location>
        <position position="1053"/>
    </location>
    <ligand>
        <name>Mg(2+)</name>
        <dbReference type="ChEBI" id="CHEBI:18420"/>
    </ligand>
</feature>
<feature type="binding site" evidence="6">
    <location>
        <position position="1056"/>
    </location>
    <ligand>
        <name>ATP</name>
        <dbReference type="ChEBI" id="CHEBI:30616"/>
    </ligand>
</feature>
<feature type="binding site" evidence="6">
    <location>
        <position position="1057"/>
    </location>
    <ligand>
        <name>ATP</name>
        <dbReference type="ChEBI" id="CHEBI:30616"/>
    </ligand>
</feature>
<feature type="binding site" evidence="3">
    <location>
        <position position="1057"/>
    </location>
    <ligand>
        <name>Mg(2+)</name>
        <dbReference type="ChEBI" id="CHEBI:18420"/>
    </ligand>
</feature>
<feature type="binding site" evidence="12">
    <location>
        <begin position="1361"/>
        <end position="1368"/>
    </location>
    <ligand>
        <name>ATP</name>
        <dbReference type="ChEBI" id="CHEBI:30616"/>
    </ligand>
</feature>
<feature type="splice variant" id="VSP_006959" description="In isoform 2." evidence="11">
    <location>
        <begin position="1120"/>
        <end position="1135"/>
    </location>
</feature>
<feature type="sequence variant" description="In strain: CAST, MAI, MBT and PWK." evidence="9">
    <original>V</original>
    <variation>A</variation>
    <location>
        <position position="700"/>
    </location>
</feature>
<feature type="sequence variant" description="In strain: CAST, MAI, MBT and PWK." evidence="9">
    <original>S</original>
    <variation>L</variation>
    <location>
        <position position="716"/>
    </location>
</feature>
<feature type="sequence conflict" description="In Ref. 2; AAH29551." evidence="12" ref="2">
    <original>L</original>
    <variation>F</variation>
    <location>
        <position position="1239"/>
    </location>
</feature>
<accession>Q8K2X1</accession>
<protein>
    <recommendedName>
        <fullName>Phospholipid-transporting ATPase VD</fullName>
        <ecNumber evidence="5">7.6.2.1</ecNumber>
    </recommendedName>
    <alternativeName>
        <fullName>ATPase class V type 10D</fullName>
    </alternativeName>
    <alternativeName>
        <fullName>P4-ATPase flippase complex alpha subunit ATP10D</fullName>
    </alternativeName>
</protein>
<reference evidence="12" key="1">
    <citation type="journal article" date="2003" name="Mamm. Genome">
        <title>Characterization of a putative type IV aminophospholipid transporter P-type ATPase.</title>
        <authorList>
            <person name="Flamant S."/>
            <person name="Pescher P."/>
            <person name="Lemercier B."/>
            <person name="Clement-Ziza M."/>
            <person name="Kepes F."/>
            <person name="Fellous M."/>
            <person name="Milon G."/>
            <person name="Marchal G."/>
            <person name="Besmond C."/>
        </authorList>
    </citation>
    <scope>NUCLEOTIDE SEQUENCE [MRNA] (ISOFORM 1)</scope>
    <scope>TISSUE SPECIFICITY</scope>
    <scope>VARIANTS ALA-700 AND LEU-716</scope>
    <source>
        <strain>BALB/cJ</strain>
        <strain>C57BL/6J</strain>
        <strain>CAST/EiJ</strain>
        <strain>MAI</strain>
        <strain>MBT</strain>
        <strain>PWK</strain>
        <tissue>Monocyte</tissue>
    </source>
</reference>
<reference key="2">
    <citation type="journal article" date="2004" name="Genome Res.">
        <title>The status, quality, and expansion of the NIH full-length cDNA project: the Mammalian Gene Collection (MGC).</title>
        <authorList>
            <consortium name="The MGC Project Team"/>
        </authorList>
    </citation>
    <scope>NUCLEOTIDE SEQUENCE [LARGE SCALE MRNA] OF 1079-1416 (ISOFORM 2)</scope>
</reference>
<reference key="3">
    <citation type="journal article" date="2018" name="Sci. Rep.">
        <title>Proteomic Analysis and Functional Characterization of P4-ATPase Phospholipid Flippases from Murine Tissues.</title>
        <authorList>
            <person name="Wang J."/>
            <person name="Molday L.L."/>
            <person name="Hii T."/>
            <person name="Coleman J.A."/>
            <person name="Wen T."/>
            <person name="Andersen J.P."/>
            <person name="Molday R.S."/>
        </authorList>
    </citation>
    <scope>INTERACTION WITH TMEM30A</scope>
    <scope>TISSUE SPECIFICITY</scope>
</reference>
<comment type="function">
    <text evidence="5">Catalytic component of a P4-ATPase flippase complex, which catalyzes the hydrolysis of ATP coupled to the transport of glucosylceramide (GlcCer) from the outer to the inner leaflet of the plasma membrane.</text>
</comment>
<comment type="catalytic activity">
    <reaction evidence="5">
        <text>ATP + H2O + phospholipidSide 1 = ADP + phosphate + phospholipidSide 2.</text>
        <dbReference type="EC" id="7.6.2.1"/>
    </reaction>
</comment>
<comment type="catalytic activity">
    <reaction evidence="5">
        <text>a beta-D-glucosyl-(1&lt;-&gt;1')-N-acylsphing-4-enine(out) + ATP + H2O = a beta-D-glucosyl-(1&lt;-&gt;1')-N-acylsphing-4-enine(in) + ADP + phosphate + H(+)</text>
        <dbReference type="Rhea" id="RHEA:66036"/>
        <dbReference type="ChEBI" id="CHEBI:15377"/>
        <dbReference type="ChEBI" id="CHEBI:15378"/>
        <dbReference type="ChEBI" id="CHEBI:22801"/>
        <dbReference type="ChEBI" id="CHEBI:30616"/>
        <dbReference type="ChEBI" id="CHEBI:43474"/>
        <dbReference type="ChEBI" id="CHEBI:456216"/>
    </reaction>
    <physiologicalReaction direction="left-to-right" evidence="5">
        <dbReference type="Rhea" id="RHEA:66037"/>
    </physiologicalReaction>
</comment>
<comment type="cofactor">
    <cofactor evidence="6">
        <name>Mg(2+)</name>
        <dbReference type="ChEBI" id="CHEBI:18420"/>
    </cofactor>
</comment>
<comment type="subunit">
    <text evidence="10">Component of a P4-ATPase flippase complex which consists of a catalytic alpha subunit ATP10A and an accessory beta subunit TMEM30A.</text>
</comment>
<comment type="subcellular location">
    <subcellularLocation>
        <location evidence="5">Cell membrane</location>
        <topology evidence="7">Multi-pass membrane protein</topology>
    </subcellularLocation>
    <subcellularLocation>
        <location evidence="5">Endoplasmic reticulum membrane</location>
        <topology evidence="7">Multi-pass membrane protein</topology>
    </subcellularLocation>
    <text evidence="5">Exit from the endoplasmic reticulum requires the presence of TMEM30A, but not that of TMEM30B.</text>
</comment>
<comment type="alternative products">
    <event type="alternative splicing"/>
    <isoform>
        <id>Q8K2X1-1</id>
        <name evidence="12">1</name>
        <sequence type="displayed"/>
    </isoform>
    <isoform>
        <id>Q8K2X1-2</id>
        <name evidence="12">2</name>
        <sequence type="described" ref="VSP_006959"/>
    </isoform>
</comment>
<comment type="tissue specificity">
    <text evidence="9 10">Expressed at low amounts in liver, brain, testes, and kidney (at protein level) (PubMed:12532265, PubMed:30018401). Expressed in placenta (PubMed:12532265).</text>
</comment>
<comment type="PTM">
    <text evidence="1">Autophosphorylated at the conserved aspartate of the P-type ATPase signature sequence.</text>
</comment>
<comment type="polymorphism">
    <text evidence="9">In strain C57BL/6, a polymorphism generates a premature stop codon at position 764.</text>
</comment>
<comment type="similarity">
    <text evidence="12">Belongs to the cation transport ATPase (P-type) (TC 3.A.3) family. Type IV subfamily.</text>
</comment>
<comment type="sequence caution" evidence="12">
    <conflict type="frameshift">
        <sequence resource="EMBL-CDS" id="AAH29551"/>
    </conflict>
</comment>
<keyword id="KW-0025">Alternative splicing</keyword>
<keyword id="KW-0067">ATP-binding</keyword>
<keyword id="KW-1003">Cell membrane</keyword>
<keyword id="KW-0256">Endoplasmic reticulum</keyword>
<keyword id="KW-0445">Lipid transport</keyword>
<keyword id="KW-0460">Magnesium</keyword>
<keyword id="KW-0472">Membrane</keyword>
<keyword id="KW-0479">Metal-binding</keyword>
<keyword id="KW-0547">Nucleotide-binding</keyword>
<keyword id="KW-1185">Reference proteome</keyword>
<keyword id="KW-1278">Translocase</keyword>
<keyword id="KW-0812">Transmembrane</keyword>
<keyword id="KW-1133">Transmembrane helix</keyword>
<keyword id="KW-0813">Transport</keyword>
<name>AT10D_MOUSE</name>
<organism evidence="13">
    <name type="scientific">Mus musculus</name>
    <name type="common">Mouse</name>
    <dbReference type="NCBI Taxonomy" id="10090"/>
    <lineage>
        <taxon>Eukaryota</taxon>
        <taxon>Metazoa</taxon>
        <taxon>Chordata</taxon>
        <taxon>Craniata</taxon>
        <taxon>Vertebrata</taxon>
        <taxon>Euteleostomi</taxon>
        <taxon>Mammalia</taxon>
        <taxon>Eutheria</taxon>
        <taxon>Euarchontoglires</taxon>
        <taxon>Glires</taxon>
        <taxon>Rodentia</taxon>
        <taxon>Myomorpha</taxon>
        <taxon>Muroidea</taxon>
        <taxon>Muridae</taxon>
        <taxon>Murinae</taxon>
        <taxon>Mus</taxon>
        <taxon>Mus</taxon>
    </lineage>
</organism>
<proteinExistence type="evidence at protein level"/>